<organism>
    <name type="scientific">Desulfitobacterium hafniense (strain Y51)</name>
    <dbReference type="NCBI Taxonomy" id="138119"/>
    <lineage>
        <taxon>Bacteria</taxon>
        <taxon>Bacillati</taxon>
        <taxon>Bacillota</taxon>
        <taxon>Clostridia</taxon>
        <taxon>Eubacteriales</taxon>
        <taxon>Desulfitobacteriaceae</taxon>
        <taxon>Desulfitobacterium</taxon>
    </lineage>
</organism>
<comment type="function">
    <text evidence="1">Catalyzes a trans-dehydration via an enolate intermediate.</text>
</comment>
<comment type="catalytic activity">
    <reaction evidence="1">
        <text>3-dehydroquinate = 3-dehydroshikimate + H2O</text>
        <dbReference type="Rhea" id="RHEA:21096"/>
        <dbReference type="ChEBI" id="CHEBI:15377"/>
        <dbReference type="ChEBI" id="CHEBI:16630"/>
        <dbReference type="ChEBI" id="CHEBI:32364"/>
        <dbReference type="EC" id="4.2.1.10"/>
    </reaction>
</comment>
<comment type="pathway">
    <text evidence="1">Metabolic intermediate biosynthesis; chorismate biosynthesis; chorismate from D-erythrose 4-phosphate and phosphoenolpyruvate: step 3/7.</text>
</comment>
<comment type="subunit">
    <text evidence="1">Homododecamer.</text>
</comment>
<comment type="similarity">
    <text evidence="1">Belongs to the type-II 3-dehydroquinase family.</text>
</comment>
<proteinExistence type="inferred from homology"/>
<feature type="chain" id="PRO_1000071579" description="3-dehydroquinate dehydratase">
    <location>
        <begin position="1"/>
        <end position="145"/>
    </location>
</feature>
<feature type="active site" description="Proton acceptor" evidence="1">
    <location>
        <position position="23"/>
    </location>
</feature>
<feature type="active site" description="Proton donor" evidence="1">
    <location>
        <position position="99"/>
    </location>
</feature>
<feature type="binding site" evidence="1">
    <location>
        <position position="73"/>
    </location>
    <ligand>
        <name>substrate</name>
    </ligand>
</feature>
<feature type="binding site" evidence="1">
    <location>
        <position position="79"/>
    </location>
    <ligand>
        <name>substrate</name>
    </ligand>
</feature>
<feature type="binding site" evidence="1">
    <location>
        <position position="86"/>
    </location>
    <ligand>
        <name>substrate</name>
    </ligand>
</feature>
<feature type="binding site" evidence="1">
    <location>
        <begin position="100"/>
        <end position="101"/>
    </location>
    <ligand>
        <name>substrate</name>
    </ligand>
</feature>
<feature type="binding site" evidence="1">
    <location>
        <position position="110"/>
    </location>
    <ligand>
        <name>substrate</name>
    </ligand>
</feature>
<feature type="site" description="Transition state stabilizer" evidence="1">
    <location>
        <position position="18"/>
    </location>
</feature>
<protein>
    <recommendedName>
        <fullName evidence="1">3-dehydroquinate dehydratase</fullName>
        <shortName evidence="1">3-dehydroquinase</shortName>
        <ecNumber evidence="1">4.2.1.10</ecNumber>
    </recommendedName>
    <alternativeName>
        <fullName evidence="1">Type II DHQase</fullName>
    </alternativeName>
</protein>
<sequence length="145" mass="16133">MGKIWVLHGPNLNLLGRREPDKYGTQTLDEINNELLHKAHTAGIPIQVEQTNFEGELIQWIHSMGPDDFLIINPGAWTHYSYAVRDAITSVQVPTIEVHLSNIHAREEFRKTSVIAPVCCGQISGLGGKSYSLALDYALEALTQK</sequence>
<evidence type="ECO:0000255" key="1">
    <source>
        <dbReference type="HAMAP-Rule" id="MF_00169"/>
    </source>
</evidence>
<reference key="1">
    <citation type="journal article" date="2006" name="J. Bacteriol.">
        <title>Complete genome sequence of the dehalorespiring bacterium Desulfitobacterium hafniense Y51 and comparison with Dehalococcoides ethenogenes 195.</title>
        <authorList>
            <person name="Nonaka H."/>
            <person name="Keresztes G."/>
            <person name="Shinoda Y."/>
            <person name="Ikenaga Y."/>
            <person name="Abe M."/>
            <person name="Naito K."/>
            <person name="Inatomi K."/>
            <person name="Furukawa K."/>
            <person name="Inui M."/>
            <person name="Yukawa H."/>
        </authorList>
    </citation>
    <scope>NUCLEOTIDE SEQUENCE [LARGE SCALE GENOMIC DNA]</scope>
    <source>
        <strain>Y51</strain>
    </source>
</reference>
<gene>
    <name evidence="1" type="primary">aroQ</name>
    <name type="ordered locus">DSY2378</name>
</gene>
<dbReference type="EC" id="4.2.1.10" evidence="1"/>
<dbReference type="EMBL" id="AP008230">
    <property type="protein sequence ID" value="BAE84167.1"/>
    <property type="molecule type" value="Genomic_DNA"/>
</dbReference>
<dbReference type="RefSeq" id="WP_011460281.1">
    <property type="nucleotide sequence ID" value="NC_007907.1"/>
</dbReference>
<dbReference type="SMR" id="Q24UX5"/>
<dbReference type="STRING" id="138119.DSY2378"/>
<dbReference type="KEGG" id="dsy:DSY2378"/>
<dbReference type="eggNOG" id="COG0757">
    <property type="taxonomic scope" value="Bacteria"/>
</dbReference>
<dbReference type="HOGENOM" id="CLU_090968_3_0_9"/>
<dbReference type="UniPathway" id="UPA00053">
    <property type="reaction ID" value="UER00086"/>
</dbReference>
<dbReference type="Proteomes" id="UP000001946">
    <property type="component" value="Chromosome"/>
</dbReference>
<dbReference type="GO" id="GO:0003855">
    <property type="term" value="F:3-dehydroquinate dehydratase activity"/>
    <property type="evidence" value="ECO:0007669"/>
    <property type="project" value="UniProtKB-UniRule"/>
</dbReference>
<dbReference type="GO" id="GO:0008652">
    <property type="term" value="P:amino acid biosynthetic process"/>
    <property type="evidence" value="ECO:0007669"/>
    <property type="project" value="UniProtKB-KW"/>
</dbReference>
<dbReference type="GO" id="GO:0009073">
    <property type="term" value="P:aromatic amino acid family biosynthetic process"/>
    <property type="evidence" value="ECO:0007669"/>
    <property type="project" value="UniProtKB-KW"/>
</dbReference>
<dbReference type="GO" id="GO:0009423">
    <property type="term" value="P:chorismate biosynthetic process"/>
    <property type="evidence" value="ECO:0007669"/>
    <property type="project" value="UniProtKB-UniRule"/>
</dbReference>
<dbReference type="GO" id="GO:0019631">
    <property type="term" value="P:quinate catabolic process"/>
    <property type="evidence" value="ECO:0007669"/>
    <property type="project" value="TreeGrafter"/>
</dbReference>
<dbReference type="CDD" id="cd00466">
    <property type="entry name" value="DHQase_II"/>
    <property type="match status" value="1"/>
</dbReference>
<dbReference type="Gene3D" id="3.40.50.9100">
    <property type="entry name" value="Dehydroquinase, class II"/>
    <property type="match status" value="1"/>
</dbReference>
<dbReference type="HAMAP" id="MF_00169">
    <property type="entry name" value="AroQ"/>
    <property type="match status" value="1"/>
</dbReference>
<dbReference type="InterPro" id="IPR001874">
    <property type="entry name" value="DHquinase_II"/>
</dbReference>
<dbReference type="InterPro" id="IPR018509">
    <property type="entry name" value="DHquinase_II_CS"/>
</dbReference>
<dbReference type="InterPro" id="IPR036441">
    <property type="entry name" value="DHquinase_II_sf"/>
</dbReference>
<dbReference type="NCBIfam" id="TIGR01088">
    <property type="entry name" value="aroQ"/>
    <property type="match status" value="1"/>
</dbReference>
<dbReference type="NCBIfam" id="NF003805">
    <property type="entry name" value="PRK05395.1-2"/>
    <property type="match status" value="1"/>
</dbReference>
<dbReference type="NCBIfam" id="NF003806">
    <property type="entry name" value="PRK05395.1-3"/>
    <property type="match status" value="1"/>
</dbReference>
<dbReference type="NCBIfam" id="NF003807">
    <property type="entry name" value="PRK05395.1-4"/>
    <property type="match status" value="1"/>
</dbReference>
<dbReference type="PANTHER" id="PTHR21272">
    <property type="entry name" value="CATABOLIC 3-DEHYDROQUINASE"/>
    <property type="match status" value="1"/>
</dbReference>
<dbReference type="PANTHER" id="PTHR21272:SF3">
    <property type="entry name" value="CATABOLIC 3-DEHYDROQUINASE"/>
    <property type="match status" value="1"/>
</dbReference>
<dbReference type="Pfam" id="PF01220">
    <property type="entry name" value="DHquinase_II"/>
    <property type="match status" value="1"/>
</dbReference>
<dbReference type="PIRSF" id="PIRSF001399">
    <property type="entry name" value="DHquinase_II"/>
    <property type="match status" value="1"/>
</dbReference>
<dbReference type="SUPFAM" id="SSF52304">
    <property type="entry name" value="Type II 3-dehydroquinate dehydratase"/>
    <property type="match status" value="1"/>
</dbReference>
<dbReference type="PROSITE" id="PS01029">
    <property type="entry name" value="DEHYDROQUINASE_II"/>
    <property type="match status" value="1"/>
</dbReference>
<name>AROQ_DESHY</name>
<accession>Q24UX5</accession>
<keyword id="KW-0028">Amino-acid biosynthesis</keyword>
<keyword id="KW-0057">Aromatic amino acid biosynthesis</keyword>
<keyword id="KW-0456">Lyase</keyword>
<keyword id="KW-1185">Reference proteome</keyword>